<reference key="1">
    <citation type="journal article" date="2000" name="Nature">
        <title>Sequence and analysis of chromosome 3 of the plant Arabidopsis thaliana.</title>
        <authorList>
            <person name="Salanoubat M."/>
            <person name="Lemcke K."/>
            <person name="Rieger M."/>
            <person name="Ansorge W."/>
            <person name="Unseld M."/>
            <person name="Fartmann B."/>
            <person name="Valle G."/>
            <person name="Bloecker H."/>
            <person name="Perez-Alonso M."/>
            <person name="Obermaier B."/>
            <person name="Delseny M."/>
            <person name="Boutry M."/>
            <person name="Grivell L.A."/>
            <person name="Mache R."/>
            <person name="Puigdomenech P."/>
            <person name="De Simone V."/>
            <person name="Choisne N."/>
            <person name="Artiguenave F."/>
            <person name="Robert C."/>
            <person name="Brottier P."/>
            <person name="Wincker P."/>
            <person name="Cattolico L."/>
            <person name="Weissenbach J."/>
            <person name="Saurin W."/>
            <person name="Quetier F."/>
            <person name="Schaefer M."/>
            <person name="Mueller-Auer S."/>
            <person name="Gabel C."/>
            <person name="Fuchs M."/>
            <person name="Benes V."/>
            <person name="Wurmbach E."/>
            <person name="Drzonek H."/>
            <person name="Erfle H."/>
            <person name="Jordan N."/>
            <person name="Bangert S."/>
            <person name="Wiedelmann R."/>
            <person name="Kranz H."/>
            <person name="Voss H."/>
            <person name="Holland R."/>
            <person name="Brandt P."/>
            <person name="Nyakatura G."/>
            <person name="Vezzi A."/>
            <person name="D'Angelo M."/>
            <person name="Pallavicini A."/>
            <person name="Toppo S."/>
            <person name="Simionati B."/>
            <person name="Conrad A."/>
            <person name="Hornischer K."/>
            <person name="Kauer G."/>
            <person name="Loehnert T.-H."/>
            <person name="Nordsiek G."/>
            <person name="Reichelt J."/>
            <person name="Scharfe M."/>
            <person name="Schoen O."/>
            <person name="Bargues M."/>
            <person name="Terol J."/>
            <person name="Climent J."/>
            <person name="Navarro P."/>
            <person name="Collado C."/>
            <person name="Perez-Perez A."/>
            <person name="Ottenwaelder B."/>
            <person name="Duchemin D."/>
            <person name="Cooke R."/>
            <person name="Laudie M."/>
            <person name="Berger-Llauro C."/>
            <person name="Purnelle B."/>
            <person name="Masuy D."/>
            <person name="de Haan M."/>
            <person name="Maarse A.C."/>
            <person name="Alcaraz J.-P."/>
            <person name="Cottet A."/>
            <person name="Casacuberta E."/>
            <person name="Monfort A."/>
            <person name="Argiriou A."/>
            <person name="Flores M."/>
            <person name="Liguori R."/>
            <person name="Vitale D."/>
            <person name="Mannhaupt G."/>
            <person name="Haase D."/>
            <person name="Schoof H."/>
            <person name="Rudd S."/>
            <person name="Zaccaria P."/>
            <person name="Mewes H.-W."/>
            <person name="Mayer K.F.X."/>
            <person name="Kaul S."/>
            <person name="Town C.D."/>
            <person name="Koo H.L."/>
            <person name="Tallon L.J."/>
            <person name="Jenkins J."/>
            <person name="Rooney T."/>
            <person name="Rizzo M."/>
            <person name="Walts A."/>
            <person name="Utterback T."/>
            <person name="Fujii C.Y."/>
            <person name="Shea T.P."/>
            <person name="Creasy T.H."/>
            <person name="Haas B."/>
            <person name="Maiti R."/>
            <person name="Wu D."/>
            <person name="Peterson J."/>
            <person name="Van Aken S."/>
            <person name="Pai G."/>
            <person name="Militscher J."/>
            <person name="Sellers P."/>
            <person name="Gill J.E."/>
            <person name="Feldblyum T.V."/>
            <person name="Preuss D."/>
            <person name="Lin X."/>
            <person name="Nierman W.C."/>
            <person name="Salzberg S.L."/>
            <person name="White O."/>
            <person name="Venter J.C."/>
            <person name="Fraser C.M."/>
            <person name="Kaneko T."/>
            <person name="Nakamura Y."/>
            <person name="Sato S."/>
            <person name="Kato T."/>
            <person name="Asamizu E."/>
            <person name="Sasamoto S."/>
            <person name="Kimura T."/>
            <person name="Idesawa K."/>
            <person name="Kawashima K."/>
            <person name="Kishida Y."/>
            <person name="Kiyokawa C."/>
            <person name="Kohara M."/>
            <person name="Matsumoto M."/>
            <person name="Matsuno A."/>
            <person name="Muraki A."/>
            <person name="Nakayama S."/>
            <person name="Nakazaki N."/>
            <person name="Shinpo S."/>
            <person name="Takeuchi C."/>
            <person name="Wada T."/>
            <person name="Watanabe A."/>
            <person name="Yamada M."/>
            <person name="Yasuda M."/>
            <person name="Tabata S."/>
        </authorList>
    </citation>
    <scope>NUCLEOTIDE SEQUENCE [LARGE SCALE GENOMIC DNA]</scope>
    <source>
        <strain>cv. Columbia</strain>
    </source>
</reference>
<reference key="2">
    <citation type="journal article" date="2017" name="Plant J.">
        <title>Araport11: a complete reannotation of the Arabidopsis thaliana reference genome.</title>
        <authorList>
            <person name="Cheng C.Y."/>
            <person name="Krishnakumar V."/>
            <person name="Chan A.P."/>
            <person name="Thibaud-Nissen F."/>
            <person name="Schobel S."/>
            <person name="Town C.D."/>
        </authorList>
    </citation>
    <scope>GENOME REANNOTATION</scope>
    <source>
        <strain>cv. Columbia</strain>
    </source>
</reference>
<reference key="3">
    <citation type="submission" date="2003-12" db="EMBL/GenBank/DDBJ databases">
        <title>Arabidopsis cDNA clones.</title>
        <authorList>
            <person name="Shinn P."/>
            <person name="Chen H."/>
            <person name="Cheuk R.F."/>
            <person name="Kim C.J."/>
            <person name="Ecker J.R."/>
        </authorList>
    </citation>
    <scope>NUCLEOTIDE SEQUENCE [LARGE SCALE MRNA]</scope>
    <source>
        <strain>cv. Columbia</strain>
    </source>
</reference>
<reference key="4">
    <citation type="journal article" date="2012" name="Plant J.">
        <title>The SAUR19 subfamily of SMALL AUXIN UP RNA genes promote cell expansion.</title>
        <authorList>
            <person name="Spartz A.K."/>
            <person name="Lee S.H."/>
            <person name="Wenger J.P."/>
            <person name="Gonzalez N."/>
            <person name="Itoh H."/>
            <person name="Inze D."/>
            <person name="Peer W.A."/>
            <person name="Murphy A.S."/>
            <person name="Overvoorde P.J."/>
            <person name="Gray W.M."/>
        </authorList>
    </citation>
    <scope>GENE FAMILY</scope>
    <source>
        <strain>cv. Columbia</strain>
    </source>
</reference>
<reference key="5">
    <citation type="journal article" date="2019" name="BMC Genomics">
        <title>Uncovering the molecular signature underlying the light intensity-dependent root development in Arabidopsis thaliana.</title>
        <authorList>
            <person name="Kumari S."/>
            <person name="Yadav S."/>
            <person name="Patra D."/>
            <person name="Singh S."/>
            <person name="Sarkar A.K."/>
            <person name="Panigrahi K.C.S."/>
        </authorList>
    </citation>
    <scope>FUNCTION</scope>
    <scope>INDUCTION BY LIGHT</scope>
</reference>
<reference key="6">
    <citation type="journal article" date="2019" name="New Phytol.">
        <title>Natural variations of growth thermo-responsiveness determined by SAUR26/27/28 proteins in Arabidopsis thaliana.</title>
        <authorList>
            <person name="Wang Z."/>
            <person name="Yang L."/>
            <person name="Liu Z."/>
            <person name="Lu M."/>
            <person name="Wang M."/>
            <person name="Sun Q."/>
            <person name="Lan Y."/>
            <person name="Shi T."/>
            <person name="Wu D."/>
            <person name="Hua J."/>
        </authorList>
    </citation>
    <scope>FUNCTION</scope>
    <scope>DISRUPTION PHENOTYPE</scope>
    <scope>INDUCTION BY TEMPERATURE AND PIF4</scope>
    <scope>TISSUE SPECIFICITY</scope>
    <scope>INTERACTION WITH PP2C-D1</scope>
    <source>
        <strain>cv. Alst-1</strain>
        <strain>cv. Ang-0</strain>
        <strain>cv. Columbia</strain>
        <strain>cv. Com-0</strain>
        <strain>cv. Dja-1</strain>
        <strain>cv. El-0</strain>
        <strain>cv. Kon</strain>
    </source>
</reference>
<gene>
    <name evidence="5" type="primary">SAUR26</name>
    <name evidence="7" type="ordered locus">At3g03850</name>
    <name evidence="8" type="ORF">F20H23.11</name>
</gene>
<evidence type="ECO:0000250" key="1">
    <source>
        <dbReference type="UniProtKB" id="O65648"/>
    </source>
</evidence>
<evidence type="ECO:0000250" key="2">
    <source>
        <dbReference type="UniProtKB" id="Q9FJG1"/>
    </source>
</evidence>
<evidence type="ECO:0000269" key="3">
    <source>
    </source>
</evidence>
<evidence type="ECO:0000269" key="4">
    <source>
    </source>
</evidence>
<evidence type="ECO:0000303" key="5">
    <source>
    </source>
</evidence>
<evidence type="ECO:0000305" key="6"/>
<evidence type="ECO:0000312" key="7">
    <source>
        <dbReference type="Araport" id="AT3G03850"/>
    </source>
</evidence>
<evidence type="ECO:0000312" key="8">
    <source>
        <dbReference type="EMBL" id="AAF00633.1"/>
    </source>
</evidence>
<protein>
    <recommendedName>
        <fullName evidence="6">Auxin-responsive protein SAUR26</fullName>
    </recommendedName>
    <alternativeName>
        <fullName evidence="5">Protein SMALL AUXIN UP RNA 26</fullName>
    </alternativeName>
</protein>
<organism>
    <name type="scientific">Arabidopsis thaliana</name>
    <name type="common">Mouse-ear cress</name>
    <dbReference type="NCBI Taxonomy" id="3702"/>
    <lineage>
        <taxon>Eukaryota</taxon>
        <taxon>Viridiplantae</taxon>
        <taxon>Streptophyta</taxon>
        <taxon>Embryophyta</taxon>
        <taxon>Tracheophyta</taxon>
        <taxon>Spermatophyta</taxon>
        <taxon>Magnoliopsida</taxon>
        <taxon>eudicotyledons</taxon>
        <taxon>Gunneridae</taxon>
        <taxon>Pentapetalae</taxon>
        <taxon>rosids</taxon>
        <taxon>malvids</taxon>
        <taxon>Brassicales</taxon>
        <taxon>Brassicaceae</taxon>
        <taxon>Camelineae</taxon>
        <taxon>Arabidopsis</taxon>
    </lineage>
</organism>
<proteinExistence type="evidence at protein level"/>
<sequence length="93" mass="10200">MALVRSLFSAKKILGGSLVKTSKAPPKGFLAVYVGESQKKQRHFVPVSYLNQPLFQDLLSKCEEEFGFDHPMGGLTIPCPVDTFISITSQLQG</sequence>
<accession>Q6NMM4</accession>
<accession>Q9SRW2</accession>
<dbReference type="EMBL" id="AC009540">
    <property type="protein sequence ID" value="AAF00633.1"/>
    <property type="status" value="ALT_SEQ"/>
    <property type="molecule type" value="Genomic_DNA"/>
</dbReference>
<dbReference type="EMBL" id="CP002686">
    <property type="protein sequence ID" value="AEE74003.1"/>
    <property type="molecule type" value="Genomic_DNA"/>
</dbReference>
<dbReference type="EMBL" id="BT010920">
    <property type="protein sequence ID" value="AAR24698.1"/>
    <property type="molecule type" value="mRNA"/>
</dbReference>
<dbReference type="EMBL" id="BT011633">
    <property type="protein sequence ID" value="AAS47639.1"/>
    <property type="molecule type" value="mRNA"/>
</dbReference>
<dbReference type="RefSeq" id="NP_187035.2">
    <property type="nucleotide sequence ID" value="NM_111256.4"/>
</dbReference>
<dbReference type="FunCoup" id="Q6NMM4">
    <property type="interactions" value="315"/>
</dbReference>
<dbReference type="STRING" id="3702.Q6NMM4"/>
<dbReference type="PaxDb" id="3702-AT3G03850.1"/>
<dbReference type="EnsemblPlants" id="AT3G03850.1">
    <property type="protein sequence ID" value="AT3G03850.1"/>
    <property type="gene ID" value="AT3G03850"/>
</dbReference>
<dbReference type="GeneID" id="821111"/>
<dbReference type="Gramene" id="AT3G03850.1">
    <property type="protein sequence ID" value="AT3G03850.1"/>
    <property type="gene ID" value="AT3G03850"/>
</dbReference>
<dbReference type="KEGG" id="ath:AT3G03850"/>
<dbReference type="Araport" id="AT3G03850"/>
<dbReference type="TAIR" id="AT3G03850">
    <property type="gene designation" value="SAUR26"/>
</dbReference>
<dbReference type="HOGENOM" id="CLU_098106_3_0_1"/>
<dbReference type="InParanoid" id="Q6NMM4"/>
<dbReference type="OMA" id="TRCHSNI"/>
<dbReference type="PhylomeDB" id="Q6NMM4"/>
<dbReference type="PRO" id="PR:Q6NMM4"/>
<dbReference type="Proteomes" id="UP000006548">
    <property type="component" value="Chromosome 3"/>
</dbReference>
<dbReference type="ExpressionAtlas" id="Q6NMM4">
    <property type="expression patterns" value="baseline and differential"/>
</dbReference>
<dbReference type="GO" id="GO:0005886">
    <property type="term" value="C:plasma membrane"/>
    <property type="evidence" value="ECO:0007669"/>
    <property type="project" value="UniProtKB-SubCell"/>
</dbReference>
<dbReference type="GO" id="GO:0009734">
    <property type="term" value="P:auxin-activated signaling pathway"/>
    <property type="evidence" value="ECO:0007669"/>
    <property type="project" value="UniProtKB-KW"/>
</dbReference>
<dbReference type="GO" id="GO:0009642">
    <property type="term" value="P:response to light intensity"/>
    <property type="evidence" value="ECO:0000270"/>
    <property type="project" value="UniProtKB"/>
</dbReference>
<dbReference type="GO" id="GO:0009266">
    <property type="term" value="P:response to temperature stimulus"/>
    <property type="evidence" value="ECO:0000315"/>
    <property type="project" value="UniProtKB"/>
</dbReference>
<dbReference type="InterPro" id="IPR003676">
    <property type="entry name" value="SAUR_fam"/>
</dbReference>
<dbReference type="PANTHER" id="PTHR31929">
    <property type="entry name" value="SAUR-LIKE AUXIN-RESPONSIVE PROTEIN FAMILY-RELATED"/>
    <property type="match status" value="1"/>
</dbReference>
<dbReference type="Pfam" id="PF02519">
    <property type="entry name" value="Auxin_inducible"/>
    <property type="match status" value="1"/>
</dbReference>
<name>SAU26_ARATH</name>
<feature type="chain" id="PRO_0000454721" description="Auxin-responsive protein SAUR26">
    <location>
        <begin position="1"/>
        <end position="93"/>
    </location>
</feature>
<comment type="function">
    <text evidence="1 2 3 4">Provide a mechanistic link between auxin and plasma membrane H(+)-ATPases (PM H(+)-ATPases, e.g. AHA1 and AHA2), and triggers PM H(+)-ATPases activity by promoting phosphorylation of their C-terminal autoinhibitory domain as a result of PP2C-D subfamily of type 2C phosphatases inhibition, thus leading to the acidification of the apoplast and the facilitation of solutes and water uptake to drive cell expansion (By similarity). Functions as a positive effectors of cell expansion through modulation of auxin transport (By similarity). Involved in thermo-responsiveness of plant architecture (PubMed:31127632). Enhances plasma membrane H(+)-ATPase (PubMed:31127632). Probably involved in light intensity mediated root development (PubMed:31325959).</text>
</comment>
<comment type="subunit">
    <text evidence="3">Interacts with PP2C-D1.</text>
</comment>
<comment type="subcellular location">
    <subcellularLocation>
        <location evidence="2">Cell membrane</location>
        <topology evidence="2">Peripheral membrane protein</topology>
    </subcellularLocation>
</comment>
<comment type="tissue specificity">
    <text evidence="3">Higher expression in thermo-responsive cultivars (e.g. cv. Alst-1, cv. Ang-0 and cv. Com-0) than in low thermo-responsive cultivars (e.g. cv. Dja-1, cv. El-0 and cv. Kon).</text>
</comment>
<comment type="induction">
    <text evidence="3 4">PIF4-dependent regulation by temperature (PubMed:31127632). In low thermo-responsive cultivars (e.g. Col-0), higher expression at 28 degrees Celsius than at 22 degrees Celsius in petioles but not in leaf blades (PubMed:31127632). In high thermo-responsive cultivars (e.g. cv. Alst-1 and cv. Ang-0) higher expression at 28 degrees Celsius than at 22 degrees Celsius in both petioles and leaf blades (PubMed:31127632). Induced by light (PubMed:31325959).</text>
</comment>
<comment type="disruption phenotype">
    <text evidence="3">Reduced rosette weight and area at 22 degrees Celsius but not at 28 degrees Celsius.</text>
</comment>
<comment type="miscellaneous">
    <text evidence="3">Exhibits a high natural sequence polymorphism between cultivars, thus conferring thermo-adaptation to environmental conditions.</text>
</comment>
<comment type="similarity">
    <text evidence="6">Belongs to the ARG7 family.</text>
</comment>
<comment type="sequence caution" evidence="6">
    <conflict type="erroneous gene model prediction">
        <sequence resource="EMBL-CDS" id="AAF00633"/>
    </conflict>
</comment>
<keyword id="KW-0927">Auxin signaling pathway</keyword>
<keyword id="KW-1003">Cell membrane</keyword>
<keyword id="KW-0217">Developmental protein</keyword>
<keyword id="KW-0341">Growth regulation</keyword>
<keyword id="KW-0472">Membrane</keyword>
<keyword id="KW-1185">Reference proteome</keyword>